<keyword id="KW-0472">Membrane</keyword>
<keyword id="KW-0539">Nucleus</keyword>
<keyword id="KW-1185">Reference proteome</keyword>
<keyword id="KW-0812">Transmembrane</keyword>
<keyword id="KW-1133">Transmembrane helix</keyword>
<organism evidence="15">
    <name type="scientific">Drosophila melanogaster</name>
    <name type="common">Fruit fly</name>
    <dbReference type="NCBI Taxonomy" id="7227"/>
    <lineage>
        <taxon>Eukaryota</taxon>
        <taxon>Metazoa</taxon>
        <taxon>Ecdysozoa</taxon>
        <taxon>Arthropoda</taxon>
        <taxon>Hexapoda</taxon>
        <taxon>Insecta</taxon>
        <taxon>Pterygota</taxon>
        <taxon>Neoptera</taxon>
        <taxon>Endopterygota</taxon>
        <taxon>Diptera</taxon>
        <taxon>Brachycera</taxon>
        <taxon>Muscomorpha</taxon>
        <taxon>Ephydroidea</taxon>
        <taxon>Drosophilidae</taxon>
        <taxon>Drosophila</taxon>
        <taxon>Sophophora</taxon>
    </lineage>
</organism>
<accession>Q9W1C5</accession>
<accession>Q8IGA9</accession>
<proteinExistence type="evidence at protein level"/>
<protein>
    <recommendedName>
        <fullName evidence="10">Integrator complex subunit 1</fullName>
    </recommendedName>
</protein>
<feature type="chain" id="PRO_0000437668" description="Integrator complex subunit 1">
    <location>
        <begin position="1"/>
        <end position="2053"/>
    </location>
</feature>
<feature type="transmembrane region" description="Helical" evidence="1">
    <location>
        <begin position="708"/>
        <end position="728"/>
    </location>
</feature>
<feature type="region of interest" description="Disordered" evidence="2">
    <location>
        <begin position="36"/>
        <end position="58"/>
    </location>
</feature>
<feature type="region of interest" description="Disordered" evidence="2">
    <location>
        <begin position="249"/>
        <end position="285"/>
    </location>
</feature>
<feature type="compositionally biased region" description="Polar residues" evidence="2">
    <location>
        <begin position="268"/>
        <end position="283"/>
    </location>
</feature>
<feature type="sequence conflict" description="In Ref. 3; AAN71641." evidence="12" ref="3">
    <original>S</original>
    <variation>T</variation>
    <location>
        <position position="150"/>
    </location>
</feature>
<feature type="sequence conflict" description="In Ref. 3; AAN71641." evidence="12" ref="3">
    <original>D</original>
    <variation>E</variation>
    <location>
        <position position="1539"/>
    </location>
</feature>
<dbReference type="EMBL" id="AE013599">
    <property type="protein sequence ID" value="AAF47145.2"/>
    <property type="molecule type" value="Genomic_DNA"/>
</dbReference>
<dbReference type="EMBL" id="BT001870">
    <property type="protein sequence ID" value="AAN71641.1"/>
    <property type="molecule type" value="mRNA"/>
</dbReference>
<dbReference type="RefSeq" id="NP_611875.1">
    <property type="nucleotide sequence ID" value="NM_138031.3"/>
</dbReference>
<dbReference type="SMR" id="Q9W1C5"/>
<dbReference type="FunCoup" id="Q9W1C5">
    <property type="interactions" value="1209"/>
</dbReference>
<dbReference type="IntAct" id="Q9W1C5">
    <property type="interactions" value="14"/>
</dbReference>
<dbReference type="STRING" id="7227.FBpp0072077"/>
<dbReference type="PaxDb" id="7227-FBpp0072077"/>
<dbReference type="EnsemblMetazoa" id="FBtr0072168">
    <property type="protein sequence ID" value="FBpp0072077"/>
    <property type="gene ID" value="FBgn0034964"/>
</dbReference>
<dbReference type="GeneID" id="37840"/>
<dbReference type="KEGG" id="dme:Dmel_CG3173"/>
<dbReference type="UCSC" id="CG3173-RA">
    <property type="organism name" value="d. melanogaster"/>
</dbReference>
<dbReference type="AGR" id="FB:FBgn0034964"/>
<dbReference type="CTD" id="26173"/>
<dbReference type="FlyBase" id="FBgn0034964">
    <property type="gene designation" value="IntS1"/>
</dbReference>
<dbReference type="VEuPathDB" id="VectorBase:FBgn0034964"/>
<dbReference type="eggNOG" id="KOG4596">
    <property type="taxonomic scope" value="Eukaryota"/>
</dbReference>
<dbReference type="GeneTree" id="ENSGT00390000015743"/>
<dbReference type="HOGENOM" id="CLU_001690_0_0_1"/>
<dbReference type="InParanoid" id="Q9W1C5"/>
<dbReference type="OMA" id="CSEFRFY"/>
<dbReference type="OrthoDB" id="19938at2759"/>
<dbReference type="PhylomeDB" id="Q9W1C5"/>
<dbReference type="Reactome" id="R-DME-6807505">
    <property type="pathway name" value="RNA polymerase II transcribes snRNA genes"/>
</dbReference>
<dbReference type="SignaLink" id="Q9W1C5"/>
<dbReference type="BioGRID-ORCS" id="37840">
    <property type="hits" value="0 hits in 1 CRISPR screen"/>
</dbReference>
<dbReference type="GenomeRNAi" id="37840"/>
<dbReference type="PRO" id="PR:Q9W1C5"/>
<dbReference type="Proteomes" id="UP000000803">
    <property type="component" value="Chromosome 2R"/>
</dbReference>
<dbReference type="Bgee" id="FBgn0034964">
    <property type="expression patterns" value="Expressed in adult Malpighian tubule (Drosophila) and 51 other cell types or tissues"/>
</dbReference>
<dbReference type="GO" id="GO:0160232">
    <property type="term" value="C:INTAC complex"/>
    <property type="evidence" value="ECO:0000314"/>
    <property type="project" value="UniProtKB"/>
</dbReference>
<dbReference type="GO" id="GO:0032039">
    <property type="term" value="C:integrator complex"/>
    <property type="evidence" value="ECO:0000314"/>
    <property type="project" value="UniProtKB"/>
</dbReference>
<dbReference type="GO" id="GO:0031965">
    <property type="term" value="C:nuclear membrane"/>
    <property type="evidence" value="ECO:0007669"/>
    <property type="project" value="UniProtKB-SubCell"/>
</dbReference>
<dbReference type="GO" id="GO:0005634">
    <property type="term" value="C:nucleus"/>
    <property type="evidence" value="ECO:0000314"/>
    <property type="project" value="FlyBase"/>
</dbReference>
<dbReference type="GO" id="GO:0045666">
    <property type="term" value="P:positive regulation of neuron differentiation"/>
    <property type="evidence" value="ECO:0000315"/>
    <property type="project" value="FlyBase"/>
</dbReference>
<dbReference type="GO" id="GO:0160240">
    <property type="term" value="P:RNA polymerase II transcription initiation surveillance"/>
    <property type="evidence" value="ECO:0000314"/>
    <property type="project" value="UniProtKB"/>
</dbReference>
<dbReference type="GO" id="GO:0034472">
    <property type="term" value="P:snRNA 3'-end processing"/>
    <property type="evidence" value="ECO:0000314"/>
    <property type="project" value="FlyBase"/>
</dbReference>
<dbReference type="GO" id="GO:0016180">
    <property type="term" value="P:snRNA processing"/>
    <property type="evidence" value="ECO:0000250"/>
    <property type="project" value="FlyBase"/>
</dbReference>
<dbReference type="GO" id="GO:0034474">
    <property type="term" value="P:U2 snRNA 3'-end processing"/>
    <property type="evidence" value="ECO:0000318"/>
    <property type="project" value="GO_Central"/>
</dbReference>
<dbReference type="InterPro" id="IPR016024">
    <property type="entry name" value="ARM-type_fold"/>
</dbReference>
<dbReference type="InterPro" id="IPR053964">
    <property type="entry name" value="INT1_R3"/>
</dbReference>
<dbReference type="InterPro" id="IPR038902">
    <property type="entry name" value="INTS1"/>
</dbReference>
<dbReference type="InterPro" id="IPR053966">
    <property type="entry name" value="INTS1_INTS2-bd"/>
</dbReference>
<dbReference type="InterPro" id="IPR053965">
    <property type="entry name" value="INTS1_R4"/>
</dbReference>
<dbReference type="InterPro" id="IPR022145">
    <property type="entry name" value="INTS1_RPB2-bd"/>
</dbReference>
<dbReference type="PANTHER" id="PTHR21224">
    <property type="entry name" value="INTEGRATOR COMPLEX SUBUNIT 1"/>
    <property type="match status" value="1"/>
</dbReference>
<dbReference type="PANTHER" id="PTHR21224:SF1">
    <property type="entry name" value="INTEGRATOR COMPLEX SUBUNIT 1"/>
    <property type="match status" value="1"/>
</dbReference>
<dbReference type="Pfam" id="PF22927">
    <property type="entry name" value="INT1_R3"/>
    <property type="match status" value="1"/>
</dbReference>
<dbReference type="Pfam" id="PF22929">
    <property type="entry name" value="INTS1_INTS2-bd"/>
    <property type="match status" value="1"/>
</dbReference>
<dbReference type="Pfam" id="PF22928">
    <property type="entry name" value="INTS1_R4"/>
    <property type="match status" value="1"/>
</dbReference>
<dbReference type="Pfam" id="PF12432">
    <property type="entry name" value="INTS1_RP2B-bd"/>
    <property type="match status" value="1"/>
</dbReference>
<dbReference type="SUPFAM" id="SSF48371">
    <property type="entry name" value="ARM repeat"/>
    <property type="match status" value="1"/>
</dbReference>
<sequence length="2053" mass="235099">MDRGKGSGSNRSQKKVPLGGELFALGKSVRDDSKSKILPIKGMSSSDRKREASTALASSSKRFRGNLKDAGAPDMSSGSSQCETWEQFAVDCDLDTVVETIYAALEQNDSETVGRLVCGVIKQTTTSSSRSKVDNIALLALIYVAKVQPSIFCTDIVACALLSFLRREANVKMRYNTNLHILFANLLTRGFMEISQWPEVLLRIYIDDAVNERYWADNELCAPLVKNICAAFKTRTPHISLLRWDVSSSLPSGQAHRDSMTVDDDSGDNSTQSLDASPLNTESEPIPDAMCTTKSRFSDAVVQKHVSDAIRDQLNKRQQQDNYTRNFLKFLCTTSGIAEVRCLSISRLELWIHNGKLVKFAQQLLSYICFNIKGRNTQDNEVLLVLVKMRLKTKPLINHYMSCLKEMIFLQPEILSTVMKLVVQNELSNTRNPNNMGMLATMFQTSADQSAATLAEIYQEFLLQRDDCLRTLRVFLRELVRMLRFDVNLVKFCKTFLSEREDLTPQIEMFEFKERIFNSMVDIVCLCMFLSATPQAREASLSLKTNRDTKNNHALLKLYNQMSQIQLDTVSWMYETVPTLFKIPAAEYHQALHKLLLLDSPEQYSRCDQWPSEPERGAILRIISETPIHEETLLRIILIGITKDIPFSIANTFDVLLLVIKRVSGMKATNIPAVQANKFDIIDFLFSMSEYHHPENIRLPAEYEPPKLAIIAFYWKAWLILLMISAHNPSSFGAFCWDHYPTMKMMMEICITNQFNNSSATKDELQIITMERDHILQFETYLAAQTSPHAVITEETAILITQLMLMDPMGTPRKVPSMVLDQLKFLNQTYKLGHLFCRCRKPDLLLDIIQRQGTTQSMPWLSDLVQNSEGDFSHLPVQCLCEFLLFNAHIINEENSRDAELVNFLRNLIFDGNLSHQIVCELLDYIFRRLSSTVKQSRVAALSGLKIIFRHSGDFENEWLLKSLQQIPHFYEVKPFIIPQLRAACQVENCPELIMAYIQFITAHTLNDPVNEMLDHVIDMAQLIVERSTMFQHIIISQEDYDYVPDENRIQTLKCLFVMFNNYIIKLREYHEPYEWTEYPDLLMVQFDDGVQLPLHINIIHAFIILLTYSNSNMPESIPILDYWFPPGRPAPVAFLPSMPQEQVQLLPDWLKLKMIRSSVDRLIEAALNDLTPDQIVLFVQNFGTPVNSMSKLLAMLDTAVLEQFDLVKNAILNKAYLAQLIEIQQARGAKNGHYTVQALDLHSHSQTVPDLPKISVVIQEAVEIDDYDSSDSDDRPTNFLATKEVAQTILTQPDQLTESRSDCRSLIQKLLDMLASPNSNRADVVNAITEVLAVGCSVTMSRHACTFLRTFFSCMLHSDKYHILENALQKNLSMFKHTFADSSLLQKSELYHESLVFMLRNSREIYAQQFKANTALVARKRIVRAIVQSFDQTKDSKTVAKSKSDQLFHNGLFIDWLSEMDPEIVSTQLMKERFLFSKSCSEFRFYLLSLINHQTNWDTIERIAEYLFKNFHEDYDYATVLNYFEALTTNPKLWKGRDKYMSKNVRPDAFFMLRTSELEPFSHFILHEGLSEVKLDSKNYDFKLCSRMNLLFKLTEKRRDLMVKVMEHVEKSSVSDYLKLQVLQQMYIMYPRIKFLKPGKTGEQAYKLQNLKGCQADKVSNNLITCLGSLVGKKDFETLSTDTELLLRKLAASHPLLFLRQLGVLSSIMQGRAQLSMKALREEHHFHRFVQILRTLELLQPTIFEEAYKNEIQNTLSCYFNFFKHHSNVKEACQMLNKFVQMLQAYINYNPSSALLFIEQYVGILKELAAKYTSLGKLQVLVQAVALLQHKSHSATELDDEEVKYEYDLDEHFDVKPSASKPVVTEDPIEVNPQTPIDPSSSRGPLSVLTLGSYSRSNYTDISPHFLDLVKIIKQSNTEDVVLGPMQELECLTSKRFVFINELFERLLNLIFSPSAQIRSIAFIILIRHLKHNPGNSDINLCTLNAYIQCLRDENSSVAATAIDNLPEMSVLLQEHAIDILTVAFSLGLKSCLNTGHQIRKVLQTLVIQHGY</sequence>
<comment type="function">
    <text evidence="3 4 5 7">Component of the integrator complex, a multiprotein complex that terminates RNA polymerase II (Pol II) transcription in the promoter-proximal region of genes (PubMed:21078872, PubMed:23097424, PubMed:32966759). The integrator complex provides a quality checkpoint during transcription elongation by driving premature transcription termination of transcripts that are unfavorably configured for transcriptional elongation: the complex terminates transcription by (1) catalyzing dephosphorylation of the C-terminal domain (CTD) of Pol II subunit Polr2A/Rbp1 and Spt5, and (2) degrading the exiting nascent RNA transcript via endonuclease activity (PubMed:32966759). The integrator complex is also involved in the 3'-end processing of the U7 snRNA, and also the spliceosomal snRNAs U1, U2, U4 and U5 (PubMed:21078872, PubMed:23097424, PubMed:23288851). Required for the normal expression of the Integrator complex component IntS12 (PubMed:23288851).</text>
</comment>
<comment type="subunit">
    <text evidence="4 5 6 7 8 9">Belongs to the multiprotein complex Integrator, at least composed of IntS1, IntS2, IntS3, IntS4, omd/IntS5, IntS6, defl/IntS7, IntS8, IntS9, IntS10, IntS11, IntS12, asun/IntS13, IntS14 and IntS15 (PubMed:23097424, PubMed:31530651, PubMed:32966759, PubMed:39032490). The core complex associates with protein phosphatase 2A subunits mts/PP2A and Pp2A-29B, to form the Integrator-PP2A (INTAC) complex (PubMed:32966759, PubMed:37995689). Within the complex, interacts with IntS12 and IntS9 (PubMed:23288851). Interaction with IntS12 is likely to be important for promoting 3'-end processing of snRNAs (PubMed:23288851). Interacts with Mediator complex members Cdk8 and CycC (PubMed:23097424).</text>
</comment>
<comment type="subcellular location">
    <subcellularLocation>
        <location evidence="5">Nucleus membrane</location>
        <topology evidence="1">Single-pass membrane protein</topology>
    </subcellularLocation>
    <subcellularLocation>
        <location evidence="9">Nucleus</location>
    </subcellularLocation>
</comment>
<comment type="similarity">
    <text evidence="12">Belongs to the Integrator subunit 1 family.</text>
</comment>
<name>INT1_DROME</name>
<reference evidence="15" key="1">
    <citation type="journal article" date="2000" name="Science">
        <title>The genome sequence of Drosophila melanogaster.</title>
        <authorList>
            <person name="Adams M.D."/>
            <person name="Celniker S.E."/>
            <person name="Holt R.A."/>
            <person name="Evans C.A."/>
            <person name="Gocayne J.D."/>
            <person name="Amanatides P.G."/>
            <person name="Scherer S.E."/>
            <person name="Li P.W."/>
            <person name="Hoskins R.A."/>
            <person name="Galle R.F."/>
            <person name="George R.A."/>
            <person name="Lewis S.E."/>
            <person name="Richards S."/>
            <person name="Ashburner M."/>
            <person name="Henderson S.N."/>
            <person name="Sutton G.G."/>
            <person name="Wortman J.R."/>
            <person name="Yandell M.D."/>
            <person name="Zhang Q."/>
            <person name="Chen L.X."/>
            <person name="Brandon R.C."/>
            <person name="Rogers Y.-H.C."/>
            <person name="Blazej R.G."/>
            <person name="Champe M."/>
            <person name="Pfeiffer B.D."/>
            <person name="Wan K.H."/>
            <person name="Doyle C."/>
            <person name="Baxter E.G."/>
            <person name="Helt G."/>
            <person name="Nelson C.R."/>
            <person name="Miklos G.L.G."/>
            <person name="Abril J.F."/>
            <person name="Agbayani A."/>
            <person name="An H.-J."/>
            <person name="Andrews-Pfannkoch C."/>
            <person name="Baldwin D."/>
            <person name="Ballew R.M."/>
            <person name="Basu A."/>
            <person name="Baxendale J."/>
            <person name="Bayraktaroglu L."/>
            <person name="Beasley E.M."/>
            <person name="Beeson K.Y."/>
            <person name="Benos P.V."/>
            <person name="Berman B.P."/>
            <person name="Bhandari D."/>
            <person name="Bolshakov S."/>
            <person name="Borkova D."/>
            <person name="Botchan M.R."/>
            <person name="Bouck J."/>
            <person name="Brokstein P."/>
            <person name="Brottier P."/>
            <person name="Burtis K.C."/>
            <person name="Busam D.A."/>
            <person name="Butler H."/>
            <person name="Cadieu E."/>
            <person name="Center A."/>
            <person name="Chandra I."/>
            <person name="Cherry J.M."/>
            <person name="Cawley S."/>
            <person name="Dahlke C."/>
            <person name="Davenport L.B."/>
            <person name="Davies P."/>
            <person name="de Pablos B."/>
            <person name="Delcher A."/>
            <person name="Deng Z."/>
            <person name="Mays A.D."/>
            <person name="Dew I."/>
            <person name="Dietz S.M."/>
            <person name="Dodson K."/>
            <person name="Doup L.E."/>
            <person name="Downes M."/>
            <person name="Dugan-Rocha S."/>
            <person name="Dunkov B.C."/>
            <person name="Dunn P."/>
            <person name="Durbin K.J."/>
            <person name="Evangelista C.C."/>
            <person name="Ferraz C."/>
            <person name="Ferriera S."/>
            <person name="Fleischmann W."/>
            <person name="Fosler C."/>
            <person name="Gabrielian A.E."/>
            <person name="Garg N.S."/>
            <person name="Gelbart W.M."/>
            <person name="Glasser K."/>
            <person name="Glodek A."/>
            <person name="Gong F."/>
            <person name="Gorrell J.H."/>
            <person name="Gu Z."/>
            <person name="Guan P."/>
            <person name="Harris M."/>
            <person name="Harris N.L."/>
            <person name="Harvey D.A."/>
            <person name="Heiman T.J."/>
            <person name="Hernandez J.R."/>
            <person name="Houck J."/>
            <person name="Hostin D."/>
            <person name="Houston K.A."/>
            <person name="Howland T.J."/>
            <person name="Wei M.-H."/>
            <person name="Ibegwam C."/>
            <person name="Jalali M."/>
            <person name="Kalush F."/>
            <person name="Karpen G.H."/>
            <person name="Ke Z."/>
            <person name="Kennison J.A."/>
            <person name="Ketchum K.A."/>
            <person name="Kimmel B.E."/>
            <person name="Kodira C.D."/>
            <person name="Kraft C.L."/>
            <person name="Kravitz S."/>
            <person name="Kulp D."/>
            <person name="Lai Z."/>
            <person name="Lasko P."/>
            <person name="Lei Y."/>
            <person name="Levitsky A.A."/>
            <person name="Li J.H."/>
            <person name="Li Z."/>
            <person name="Liang Y."/>
            <person name="Lin X."/>
            <person name="Liu X."/>
            <person name="Mattei B."/>
            <person name="McIntosh T.C."/>
            <person name="McLeod M.P."/>
            <person name="McPherson D."/>
            <person name="Merkulov G."/>
            <person name="Milshina N.V."/>
            <person name="Mobarry C."/>
            <person name="Morris J."/>
            <person name="Moshrefi A."/>
            <person name="Mount S.M."/>
            <person name="Moy M."/>
            <person name="Murphy B."/>
            <person name="Murphy L."/>
            <person name="Muzny D.M."/>
            <person name="Nelson D.L."/>
            <person name="Nelson D.R."/>
            <person name="Nelson K.A."/>
            <person name="Nixon K."/>
            <person name="Nusskern D.R."/>
            <person name="Pacleb J.M."/>
            <person name="Palazzolo M."/>
            <person name="Pittman G.S."/>
            <person name="Pan S."/>
            <person name="Pollard J."/>
            <person name="Puri V."/>
            <person name="Reese M.G."/>
            <person name="Reinert K."/>
            <person name="Remington K."/>
            <person name="Saunders R.D.C."/>
            <person name="Scheeler F."/>
            <person name="Shen H."/>
            <person name="Shue B.C."/>
            <person name="Siden-Kiamos I."/>
            <person name="Simpson M."/>
            <person name="Skupski M.P."/>
            <person name="Smith T.J."/>
            <person name="Spier E."/>
            <person name="Spradling A.C."/>
            <person name="Stapleton M."/>
            <person name="Strong R."/>
            <person name="Sun E."/>
            <person name="Svirskas R."/>
            <person name="Tector C."/>
            <person name="Turner R."/>
            <person name="Venter E."/>
            <person name="Wang A.H."/>
            <person name="Wang X."/>
            <person name="Wang Z.-Y."/>
            <person name="Wassarman D.A."/>
            <person name="Weinstock G.M."/>
            <person name="Weissenbach J."/>
            <person name="Williams S.M."/>
            <person name="Woodage T."/>
            <person name="Worley K.C."/>
            <person name="Wu D."/>
            <person name="Yang S."/>
            <person name="Yao Q.A."/>
            <person name="Ye J."/>
            <person name="Yeh R.-F."/>
            <person name="Zaveri J.S."/>
            <person name="Zhan M."/>
            <person name="Zhang G."/>
            <person name="Zhao Q."/>
            <person name="Zheng L."/>
            <person name="Zheng X.H."/>
            <person name="Zhong F.N."/>
            <person name="Zhong W."/>
            <person name="Zhou X."/>
            <person name="Zhu S.C."/>
            <person name="Zhu X."/>
            <person name="Smith H.O."/>
            <person name="Gibbs R.A."/>
            <person name="Myers E.W."/>
            <person name="Rubin G.M."/>
            <person name="Venter J.C."/>
        </authorList>
    </citation>
    <scope>NUCLEOTIDE SEQUENCE [LARGE SCALE GENOMIC DNA]</scope>
    <source>
        <strain evidence="15">Berkeley</strain>
    </source>
</reference>
<reference evidence="15" key="2">
    <citation type="journal article" date="2002" name="Genome Biol.">
        <title>Annotation of the Drosophila melanogaster euchromatic genome: a systematic review.</title>
        <authorList>
            <person name="Misra S."/>
            <person name="Crosby M.A."/>
            <person name="Mungall C.J."/>
            <person name="Matthews B.B."/>
            <person name="Campbell K.S."/>
            <person name="Hradecky P."/>
            <person name="Huang Y."/>
            <person name="Kaminker J.S."/>
            <person name="Millburn G.H."/>
            <person name="Prochnik S.E."/>
            <person name="Smith C.D."/>
            <person name="Tupy J.L."/>
            <person name="Whitfield E.J."/>
            <person name="Bayraktaroglu L."/>
            <person name="Berman B.P."/>
            <person name="Bettencourt B.R."/>
            <person name="Celniker S.E."/>
            <person name="de Grey A.D.N.J."/>
            <person name="Drysdale R.A."/>
            <person name="Harris N.L."/>
            <person name="Richter J."/>
            <person name="Russo S."/>
            <person name="Schroeder A.J."/>
            <person name="Shu S.Q."/>
            <person name="Stapleton M."/>
            <person name="Yamada C."/>
            <person name="Ashburner M."/>
            <person name="Gelbart W.M."/>
            <person name="Rubin G.M."/>
            <person name="Lewis S.E."/>
        </authorList>
    </citation>
    <scope>GENOME REANNOTATION</scope>
    <source>
        <strain evidence="15">Berkeley</strain>
    </source>
</reference>
<reference evidence="13" key="3">
    <citation type="journal article" date="2002" name="Genome Biol.">
        <title>A Drosophila full-length cDNA resource.</title>
        <authorList>
            <person name="Stapleton M."/>
            <person name="Carlson J.W."/>
            <person name="Brokstein P."/>
            <person name="Yu C."/>
            <person name="Champe M."/>
            <person name="George R.A."/>
            <person name="Guarin H."/>
            <person name="Kronmiller B."/>
            <person name="Pacleb J.M."/>
            <person name="Park S."/>
            <person name="Wan K.H."/>
            <person name="Rubin G.M."/>
            <person name="Celniker S.E."/>
        </authorList>
    </citation>
    <scope>NUCLEOTIDE SEQUENCE [LARGE SCALE MRNA]</scope>
    <source>
        <strain evidence="13">Berkeley</strain>
        <tissue evidence="13">Embryo</tissue>
    </source>
</reference>
<reference evidence="12" key="4">
    <citation type="journal article" date="2011" name="Mol. Cell. Biol.">
        <title>A subset of Drosophila integrator proteins is essential for efficient U7 snRNA and spliceosomal snRNA 3'-end formation.</title>
        <authorList>
            <person name="Ezzeddine N."/>
            <person name="Chen J."/>
            <person name="Waltenspiel B."/>
            <person name="Burch B."/>
            <person name="Albrecht T."/>
            <person name="Zhuo M."/>
            <person name="Warren W.D."/>
            <person name="Marzluff W.F."/>
            <person name="Wagner E.J."/>
        </authorList>
    </citation>
    <scope>FUNCTION</scope>
</reference>
<reference evidence="12" key="5">
    <citation type="journal article" date="2012" name="RNA">
        <title>An RNAi screen identifies additional members of the Drosophila Integrator complex and a requirement for cyclin C/Cdk8 in snRNA 3'-end formation.</title>
        <authorList>
            <person name="Chen J."/>
            <person name="Ezzeddine N."/>
            <person name="Waltenspiel B."/>
            <person name="Albrecht T.R."/>
            <person name="Warren W.D."/>
            <person name="Marzluff W.F."/>
            <person name="Wagner E.J."/>
        </authorList>
    </citation>
    <scope>FUNCTION</scope>
    <scope>SUBUNIT</scope>
    <scope>INTERACTION WITH CDK8 AND CYCC</scope>
</reference>
<reference evidence="12" key="6">
    <citation type="journal article" date="2013" name="J. Biol. Chem.">
        <title>Functional analysis of the integrator subunit 12 identifies a microdomain that mediates activation of the Drosophila integrator complex.</title>
        <authorList>
            <person name="Chen J."/>
            <person name="Waltenspiel B."/>
            <person name="Warren W.D."/>
            <person name="Wagner E.J."/>
        </authorList>
    </citation>
    <scope>FUNCTION</scope>
    <scope>SUBCELLULAR LOCATION</scope>
    <scope>INTERACTION WITH INTS12 AND INTS9</scope>
</reference>
<reference key="7">
    <citation type="journal article" date="2019" name="Genes Dev.">
        <title>The Integrator complex cleaves nascent mRNAs to attenuate transcription.</title>
        <authorList>
            <person name="Tatomer D.C."/>
            <person name="Elrod N.D."/>
            <person name="Liang D."/>
            <person name="Xiao M.S."/>
            <person name="Jiang J.Z."/>
            <person name="Jonathan M."/>
            <person name="Huang K.L."/>
            <person name="Wagner E.J."/>
            <person name="Cherry S."/>
            <person name="Wilusz J.E."/>
        </authorList>
    </citation>
    <scope>IDENTIFICATION IN THE INTEGRATOR COMPLEX</scope>
</reference>
<reference key="8">
    <citation type="journal article" date="2020" name="Mol. Cell">
        <title>Integrator recruits protein phosphatase 2A to prevent pause release and facilitate transcription termination.</title>
        <authorList>
            <person name="Huang K.L."/>
            <person name="Jee D."/>
            <person name="Stein C.B."/>
            <person name="Elrod N.D."/>
            <person name="Henriques T."/>
            <person name="Mascibroda L.G."/>
            <person name="Baillat D."/>
            <person name="Russell W.K."/>
            <person name="Adelman K."/>
            <person name="Wagner E.J."/>
        </authorList>
    </citation>
    <scope>FUNCTION</scope>
    <scope>IDENTIFICATION IN THE INTAC COMPLEX</scope>
</reference>
<reference key="9">
    <citation type="journal article" date="2023" name="Mol. Cell">
        <title>IntS6 and the Integrator phosphatase module tune the efficiency of select premature transcription termination events.</title>
        <authorList>
            <person name="Fujiwara R."/>
            <person name="Zhai S.N."/>
            <person name="Liang D."/>
            <person name="Shah A.P."/>
            <person name="Tracey M."/>
            <person name="Ma X.K."/>
            <person name="Fields C.J."/>
            <person name="Mendoza-Figueroa M.S."/>
            <person name="Meline M.C."/>
            <person name="Tatomer D.C."/>
            <person name="Yang L."/>
            <person name="Wilusz J.E."/>
        </authorList>
    </citation>
    <scope>IDENTIFICATION IN THE INTAC COMPLEX</scope>
</reference>
<reference key="10">
    <citation type="journal article" date="2024" name="Mol. Cell">
        <title>Cytoplasmic binding partners of the Integrator endonuclease INTS11 and its paralog CPSF73 are required for their nuclear function.</title>
        <authorList>
            <person name="Lin M.H."/>
            <person name="Jensen M.K."/>
            <person name="Elrod N.D."/>
            <person name="Chu H.F."/>
            <person name="Haseley M."/>
            <person name="Beam A.C."/>
            <person name="Huang K.L."/>
            <person name="Chiang W."/>
            <person name="Russell W.K."/>
            <person name="Williams K."/>
            <person name="Proschel C."/>
            <person name="Wagner E.J."/>
            <person name="Tong L."/>
        </authorList>
    </citation>
    <scope>IDENTIFICATION IN THE INTEGRATOR COMPLEX</scope>
    <scope>SUBCELLULAR LOCATION</scope>
</reference>
<gene>
    <name evidence="11 14" type="primary">IntS1</name>
    <name evidence="14" type="ORF">CG3173</name>
</gene>
<evidence type="ECO:0000255" key="1"/>
<evidence type="ECO:0000256" key="2">
    <source>
        <dbReference type="SAM" id="MobiDB-lite"/>
    </source>
</evidence>
<evidence type="ECO:0000269" key="3">
    <source>
    </source>
</evidence>
<evidence type="ECO:0000269" key="4">
    <source>
    </source>
</evidence>
<evidence type="ECO:0000269" key="5">
    <source>
    </source>
</evidence>
<evidence type="ECO:0000269" key="6">
    <source>
    </source>
</evidence>
<evidence type="ECO:0000269" key="7">
    <source>
    </source>
</evidence>
<evidence type="ECO:0000269" key="8">
    <source>
    </source>
</evidence>
<evidence type="ECO:0000269" key="9">
    <source>
    </source>
</evidence>
<evidence type="ECO:0000303" key="10">
    <source>
    </source>
</evidence>
<evidence type="ECO:0000303" key="11">
    <source>
    </source>
</evidence>
<evidence type="ECO:0000305" key="12"/>
<evidence type="ECO:0000312" key="13">
    <source>
        <dbReference type="EMBL" id="AAN71641.1"/>
    </source>
</evidence>
<evidence type="ECO:0000312" key="14">
    <source>
        <dbReference type="FlyBase" id="FBgn0034964"/>
    </source>
</evidence>
<evidence type="ECO:0000312" key="15">
    <source>
        <dbReference type="Proteomes" id="UP000000803"/>
    </source>
</evidence>